<name>DEOB_ECOLI</name>
<protein>
    <recommendedName>
        <fullName evidence="1 6">Phosphopentomutase</fullName>
        <ecNumber evidence="1 2 4">5.4.2.7</ecNumber>
    </recommendedName>
    <alternativeName>
        <fullName evidence="1 5">Phosphodeoxyribomutase</fullName>
    </alternativeName>
    <alternativeName>
        <fullName evidence="5">Phosphoribomutase</fullName>
    </alternativeName>
</protein>
<comment type="function">
    <text evidence="1 2 4">Isomerase that catalyzes the conversion of deoxy-ribose 1-phosphate (dRib-1-P) and ribose 1-phosphate (Rib-1-P) to deoxy-ribose 5-phosphate (dRib-5-P) and ribose 5-phosphate (Rib-5-P), respectively.</text>
</comment>
<comment type="catalytic activity">
    <reaction evidence="1 2 4">
        <text>2-deoxy-alpha-D-ribose 1-phosphate = 2-deoxy-D-ribose 5-phosphate</text>
        <dbReference type="Rhea" id="RHEA:27658"/>
        <dbReference type="ChEBI" id="CHEBI:57259"/>
        <dbReference type="ChEBI" id="CHEBI:62877"/>
        <dbReference type="EC" id="5.4.2.7"/>
    </reaction>
</comment>
<comment type="catalytic activity">
    <reaction evidence="1 2 4">
        <text>alpha-D-ribose 1-phosphate = D-ribose 5-phosphate</text>
        <dbReference type="Rhea" id="RHEA:18793"/>
        <dbReference type="ChEBI" id="CHEBI:57720"/>
        <dbReference type="ChEBI" id="CHEBI:78346"/>
        <dbReference type="EC" id="5.4.2.7"/>
    </reaction>
</comment>
<comment type="cofactor">
    <cofactor evidence="1 4">
        <name>Mn(2+)</name>
        <dbReference type="ChEBI" id="CHEBI:29035"/>
    </cofactor>
    <cofactor evidence="4">
        <name>Co(2+)</name>
        <dbReference type="ChEBI" id="CHEBI:48828"/>
    </cofactor>
    <text evidence="1 4">Binds 2 manganese ions (By similarity). Mn(2+) and Co(2+) are equally good activators (PubMed:4992818). Can also use Ni(2+), with lower efficiency (PubMed:4992818).</text>
</comment>
<comment type="activity regulation">
    <text evidence="4">Inhibited by a number of metal ions, including Cu(2+), Cd(2+), Zn(2+), Fe(3+), Ca(2+) or Fe(2+) (PubMed:4992818). Is also inhibited approximately 85% by 50 mM sulfate and 95% by 50 mM phosphate (PubMed:4992818).</text>
</comment>
<comment type="biophysicochemical properties">
    <kinetics>
        <KM evidence="4">13 uM for deoxy-ribose 1-phosphate</KM>
        <KM evidence="4">43 uM for ribose 1-phosphate</KM>
    </kinetics>
    <phDependence>
        <text evidence="4">Optimum pH is 8.</text>
    </phDependence>
</comment>
<comment type="pathway">
    <text evidence="1 7">Carbohydrate degradation; 2-deoxy-D-ribose 1-phosphate degradation; D-glyceraldehyde 3-phosphate and acetaldehyde from 2-deoxy-alpha-D-ribose 1-phosphate: step 1/2.</text>
</comment>
<comment type="subcellular location">
    <subcellularLocation>
        <location evidence="1 6">Cytoplasm</location>
    </subcellularLocation>
</comment>
<comment type="similarity">
    <text evidence="1 6">Belongs to the phosphopentomutase family.</text>
</comment>
<evidence type="ECO:0000255" key="1">
    <source>
        <dbReference type="HAMAP-Rule" id="MF_00740"/>
    </source>
</evidence>
<evidence type="ECO:0000269" key="2">
    <source>
    </source>
</evidence>
<evidence type="ECO:0000269" key="3">
    <source>
    </source>
</evidence>
<evidence type="ECO:0000269" key="4">
    <source>
    </source>
</evidence>
<evidence type="ECO:0000303" key="5">
    <source>
    </source>
</evidence>
<evidence type="ECO:0000305" key="6"/>
<evidence type="ECO:0000305" key="7">
    <source>
    </source>
</evidence>
<accession>P0A6K6</accession>
<accession>P07651</accession>
<accession>Q2M5T4</accession>
<reference key="1">
    <citation type="journal article" date="1995" name="Nucleic Acids Res.">
        <title>Analysis of the Escherichia coli genome VI: DNA sequence of the region from 92.8 through 100 minutes.</title>
        <authorList>
            <person name="Burland V.D."/>
            <person name="Plunkett G. III"/>
            <person name="Sofia H.J."/>
            <person name="Daniels D.L."/>
            <person name="Blattner F.R."/>
        </authorList>
    </citation>
    <scope>NUCLEOTIDE SEQUENCE [LARGE SCALE GENOMIC DNA]</scope>
    <source>
        <strain>K12 / MG1655 / ATCC 47076</strain>
    </source>
</reference>
<reference key="2">
    <citation type="journal article" date="1997" name="Science">
        <title>The complete genome sequence of Escherichia coli K-12.</title>
        <authorList>
            <person name="Blattner F.R."/>
            <person name="Plunkett G. III"/>
            <person name="Bloch C.A."/>
            <person name="Perna N.T."/>
            <person name="Burland V."/>
            <person name="Riley M."/>
            <person name="Collado-Vides J."/>
            <person name="Glasner J.D."/>
            <person name="Rode C.K."/>
            <person name="Mayhew G.F."/>
            <person name="Gregor J."/>
            <person name="Davis N.W."/>
            <person name="Kirkpatrick H.A."/>
            <person name="Goeden M.A."/>
            <person name="Rose D.J."/>
            <person name="Mau B."/>
            <person name="Shao Y."/>
        </authorList>
    </citation>
    <scope>NUCLEOTIDE SEQUENCE [LARGE SCALE GENOMIC DNA]</scope>
    <source>
        <strain>K12 / MG1655 / ATCC 47076</strain>
    </source>
</reference>
<reference key="3">
    <citation type="journal article" date="2006" name="Mol. Syst. Biol.">
        <title>Highly accurate genome sequences of Escherichia coli K-12 strains MG1655 and W3110.</title>
        <authorList>
            <person name="Hayashi K."/>
            <person name="Morooka N."/>
            <person name="Yamamoto Y."/>
            <person name="Fujita K."/>
            <person name="Isono K."/>
            <person name="Choi S."/>
            <person name="Ohtsubo E."/>
            <person name="Baba T."/>
            <person name="Wanner B.L."/>
            <person name="Mori H."/>
            <person name="Horiuchi T."/>
        </authorList>
    </citation>
    <scope>NUCLEOTIDE SEQUENCE [LARGE SCALE GENOMIC DNA]</scope>
    <source>
        <strain>K12 / W3110 / ATCC 27325 / DSM 5911</strain>
    </source>
</reference>
<reference key="4">
    <citation type="journal article" date="1984" name="Nucleic Acids Res.">
        <title>The internal regulated promoter of the deo operon of Escherichia coli K-12.</title>
        <authorList>
            <person name="Valentin-Hansen P."/>
            <person name="Hammer K."/>
            <person name="Larsen J.E.L."/>
            <person name="Svendsen I."/>
        </authorList>
    </citation>
    <scope>NUCLEOTIDE SEQUENCE [GENOMIC DNA] OF 1-37</scope>
    <source>
        <strain>K12</strain>
    </source>
</reference>
<reference key="5">
    <citation type="journal article" date="1970" name="Eur. J. Biochem.">
        <title>Phosphodeoxyribomutase from Escherichia coli. Purification and some properties.</title>
        <authorList>
            <person name="Hammer-Jespersen K."/>
            <person name="Munch-Petersen A."/>
        </authorList>
    </citation>
    <scope>FUNCTION</scope>
    <scope>CATALYTIC ACTIVITY</scope>
    <scope>COFACTOR</scope>
    <scope>ACTIVITY REGULATION</scope>
    <scope>BIOPHYSICOCHEMICAL PROPERTIES</scope>
    <source>
        <strain>K12 / 103</strain>
    </source>
</reference>
<reference key="6">
    <citation type="journal article" date="1975" name="Biochemistry">
        <title>Multiple forms of phosphodeoxyribomutase from Escherichia coli. Physical and chemical characterization.</title>
        <authorList>
            <person name="Leer J.C."/>
            <person name="Hammer-Jespersen K."/>
        </authorList>
    </citation>
    <scope>FUNCTION</scope>
    <scope>CATALYTIC ACTIVITY</scope>
</reference>
<reference key="7">
    <citation type="journal article" date="2009" name="Mol. Cell. Proteomics">
        <title>Lysine acetylation is a highly abundant and evolutionarily conserved modification in Escherichia coli.</title>
        <authorList>
            <person name="Zhang J."/>
            <person name="Sprung R."/>
            <person name="Pei J."/>
            <person name="Tan X."/>
            <person name="Kim S."/>
            <person name="Zhu H."/>
            <person name="Liu C.F."/>
            <person name="Grishin N.V."/>
            <person name="Zhao Y."/>
        </authorList>
    </citation>
    <scope>ACETYLATION [LARGE SCALE ANALYSIS] AT LYS-287</scope>
    <scope>IDENTIFICATION BY MASS SPECTROMETRY</scope>
    <source>
        <strain>K12 / JW1106</strain>
        <strain>K12 / MG1655 / ATCC 47076</strain>
    </source>
</reference>
<organism>
    <name type="scientific">Escherichia coli (strain K12)</name>
    <dbReference type="NCBI Taxonomy" id="83333"/>
    <lineage>
        <taxon>Bacteria</taxon>
        <taxon>Pseudomonadati</taxon>
        <taxon>Pseudomonadota</taxon>
        <taxon>Gammaproteobacteria</taxon>
        <taxon>Enterobacterales</taxon>
        <taxon>Enterobacteriaceae</taxon>
        <taxon>Escherichia</taxon>
    </lineage>
</organism>
<proteinExistence type="evidence at protein level"/>
<gene>
    <name type="primary">deoB</name>
    <name type="synonym">drm</name>
    <name type="synonym">thyR</name>
    <name type="ordered locus">b4383</name>
    <name type="ordered locus">JW4346</name>
</gene>
<dbReference type="EC" id="5.4.2.7" evidence="1 2 4"/>
<dbReference type="EMBL" id="U14003">
    <property type="protein sequence ID" value="AAA97279.1"/>
    <property type="molecule type" value="Genomic_DNA"/>
</dbReference>
<dbReference type="EMBL" id="U00096">
    <property type="protein sequence ID" value="AAC77336.1"/>
    <property type="molecule type" value="Genomic_DNA"/>
</dbReference>
<dbReference type="EMBL" id="AP009048">
    <property type="protein sequence ID" value="BAE78372.1"/>
    <property type="molecule type" value="Genomic_DNA"/>
</dbReference>
<dbReference type="EMBL" id="X00742">
    <property type="protein sequence ID" value="CAA25325.1"/>
    <property type="molecule type" value="Genomic_DNA"/>
</dbReference>
<dbReference type="PIR" id="S56607">
    <property type="entry name" value="S56607"/>
</dbReference>
<dbReference type="RefSeq" id="NP_418800.1">
    <property type="nucleotide sequence ID" value="NC_000913.3"/>
</dbReference>
<dbReference type="RefSeq" id="WP_000816471.1">
    <property type="nucleotide sequence ID" value="NZ_STEB01000033.1"/>
</dbReference>
<dbReference type="SMR" id="P0A6K6"/>
<dbReference type="BioGRID" id="4263160">
    <property type="interactions" value="19"/>
</dbReference>
<dbReference type="BioGRID" id="853187">
    <property type="interactions" value="1"/>
</dbReference>
<dbReference type="DIP" id="DIP-48057N"/>
<dbReference type="FunCoup" id="P0A6K6">
    <property type="interactions" value="259"/>
</dbReference>
<dbReference type="IntAct" id="P0A6K6">
    <property type="interactions" value="6"/>
</dbReference>
<dbReference type="STRING" id="511145.b4383"/>
<dbReference type="iPTMnet" id="P0A6K6"/>
<dbReference type="jPOST" id="P0A6K6"/>
<dbReference type="PaxDb" id="511145-b4383"/>
<dbReference type="EnsemblBacteria" id="AAC77336">
    <property type="protein sequence ID" value="AAC77336"/>
    <property type="gene ID" value="b4383"/>
</dbReference>
<dbReference type="GeneID" id="89519362"/>
<dbReference type="GeneID" id="948910"/>
<dbReference type="KEGG" id="ecj:JW4346"/>
<dbReference type="KEGG" id="eco:b4383"/>
<dbReference type="KEGG" id="ecoc:C3026_23685"/>
<dbReference type="PATRIC" id="fig|1411691.4.peg.2302"/>
<dbReference type="EchoBASE" id="EB0216"/>
<dbReference type="eggNOG" id="COG1015">
    <property type="taxonomic scope" value="Bacteria"/>
</dbReference>
<dbReference type="HOGENOM" id="CLU_053861_0_0_6"/>
<dbReference type="InParanoid" id="P0A6K6"/>
<dbReference type="OMA" id="SGHWEMM"/>
<dbReference type="OrthoDB" id="9769930at2"/>
<dbReference type="PhylomeDB" id="P0A6K6"/>
<dbReference type="BioCyc" id="EcoCyc:PPENTOMUT-MONOMER"/>
<dbReference type="BioCyc" id="MetaCyc:PPENTOMUT-MONOMER"/>
<dbReference type="BRENDA" id="5.4.2.7">
    <property type="organism ID" value="2026"/>
</dbReference>
<dbReference type="UniPathway" id="UPA00002">
    <property type="reaction ID" value="UER00467"/>
</dbReference>
<dbReference type="PRO" id="PR:P0A6K6"/>
<dbReference type="Proteomes" id="UP000000625">
    <property type="component" value="Chromosome"/>
</dbReference>
<dbReference type="GO" id="GO:0005829">
    <property type="term" value="C:cytosol"/>
    <property type="evidence" value="ECO:0000314"/>
    <property type="project" value="EcoCyc"/>
</dbReference>
<dbReference type="GO" id="GO:0000287">
    <property type="term" value="F:magnesium ion binding"/>
    <property type="evidence" value="ECO:0007669"/>
    <property type="project" value="InterPro"/>
</dbReference>
<dbReference type="GO" id="GO:0030145">
    <property type="term" value="F:manganese ion binding"/>
    <property type="evidence" value="ECO:0007669"/>
    <property type="project" value="UniProtKB-UniRule"/>
</dbReference>
<dbReference type="GO" id="GO:0008973">
    <property type="term" value="F:phosphopentomutase activity"/>
    <property type="evidence" value="ECO:0000314"/>
    <property type="project" value="EcoCyc"/>
</dbReference>
<dbReference type="GO" id="GO:0006018">
    <property type="term" value="P:2-deoxyribose 1-phosphate catabolic process"/>
    <property type="evidence" value="ECO:0007669"/>
    <property type="project" value="UniProtKB-UniRule"/>
</dbReference>
<dbReference type="GO" id="GO:0006015">
    <property type="term" value="P:5-phosphoribose 1-diphosphate biosynthetic process"/>
    <property type="evidence" value="ECO:0007669"/>
    <property type="project" value="UniProtKB-UniPathway"/>
</dbReference>
<dbReference type="GO" id="GO:0009264">
    <property type="term" value="P:deoxyribonucleotide catabolic process"/>
    <property type="evidence" value="ECO:0000315"/>
    <property type="project" value="EcoCyc"/>
</dbReference>
<dbReference type="GO" id="GO:0006974">
    <property type="term" value="P:DNA damage response"/>
    <property type="evidence" value="ECO:0000270"/>
    <property type="project" value="EcoliWiki"/>
</dbReference>
<dbReference type="GO" id="GO:0043094">
    <property type="term" value="P:metabolic compound salvage"/>
    <property type="evidence" value="ECO:0007669"/>
    <property type="project" value="InterPro"/>
</dbReference>
<dbReference type="CDD" id="cd16009">
    <property type="entry name" value="PPM"/>
    <property type="match status" value="1"/>
</dbReference>
<dbReference type="FunFam" id="3.30.70.1250:FF:000001">
    <property type="entry name" value="Phosphopentomutase"/>
    <property type="match status" value="1"/>
</dbReference>
<dbReference type="Gene3D" id="3.40.720.10">
    <property type="entry name" value="Alkaline Phosphatase, subunit A"/>
    <property type="match status" value="1"/>
</dbReference>
<dbReference type="Gene3D" id="3.30.70.1250">
    <property type="entry name" value="Phosphopentomutase"/>
    <property type="match status" value="1"/>
</dbReference>
<dbReference type="HAMAP" id="MF_00740">
    <property type="entry name" value="Phosphopentomut"/>
    <property type="match status" value="1"/>
</dbReference>
<dbReference type="InterPro" id="IPR017850">
    <property type="entry name" value="Alkaline_phosphatase_core_sf"/>
</dbReference>
<dbReference type="InterPro" id="IPR010045">
    <property type="entry name" value="DeoB"/>
</dbReference>
<dbReference type="InterPro" id="IPR006124">
    <property type="entry name" value="Metalloenzyme"/>
</dbReference>
<dbReference type="InterPro" id="IPR024052">
    <property type="entry name" value="Phosphopentomutase_DeoB_cap_sf"/>
</dbReference>
<dbReference type="NCBIfam" id="TIGR01696">
    <property type="entry name" value="deoB"/>
    <property type="match status" value="1"/>
</dbReference>
<dbReference type="NCBIfam" id="NF003766">
    <property type="entry name" value="PRK05362.1"/>
    <property type="match status" value="1"/>
</dbReference>
<dbReference type="PANTHER" id="PTHR21110">
    <property type="entry name" value="PHOSPHOPENTOMUTASE"/>
    <property type="match status" value="1"/>
</dbReference>
<dbReference type="PANTHER" id="PTHR21110:SF0">
    <property type="entry name" value="PHOSPHOPENTOMUTASE"/>
    <property type="match status" value="1"/>
</dbReference>
<dbReference type="Pfam" id="PF01676">
    <property type="entry name" value="Metalloenzyme"/>
    <property type="match status" value="1"/>
</dbReference>
<dbReference type="PIRSF" id="PIRSF001491">
    <property type="entry name" value="Ppentomutase"/>
    <property type="match status" value="1"/>
</dbReference>
<dbReference type="SUPFAM" id="SSF53649">
    <property type="entry name" value="Alkaline phosphatase-like"/>
    <property type="match status" value="1"/>
</dbReference>
<dbReference type="SUPFAM" id="SSF143856">
    <property type="entry name" value="DeoB insert domain-like"/>
    <property type="match status" value="1"/>
</dbReference>
<keyword id="KW-0007">Acetylation</keyword>
<keyword id="KW-0963">Cytoplasm</keyword>
<keyword id="KW-0413">Isomerase</keyword>
<keyword id="KW-0464">Manganese</keyword>
<keyword id="KW-0479">Metal-binding</keyword>
<keyword id="KW-1185">Reference proteome</keyword>
<sequence>MKRAFIMVLDSFGIGATEDAERFGDVGADTLGHIAEACAKGEADNGRKGPLNLPNLTRLGLAKAHEGSTGFIPAGMDGNAEVIGAYAWAHEMSSGKDTPSGHWEIAGVPVLFEWGYFSDHENSFPQELLDKLVERANLPGYLGNCHSSGTVILDQLGEEHMKTGKPIFYTSADSVFQIACHEETFGLDKLYELCEIAREELTNGGYNIGRVIARPFIGDKAGNFQRTGNRHDLAVEPPAPTVLQKLVDEKHGQVVSVGKIADIYANCGITKKVKATGLDALFDATIKEMKEAGDNTIVFTNFVDFDSSWGHRRDVAGYAAGLELFDRRLPELMSLLRDDDILILTADHGCDPTWTGTDHTREHIPVLVYGPKVKPGSLGHRETFADIGQTLAKYFGTSDMEYGKAMF</sequence>
<feature type="chain" id="PRO_0000199819" description="Phosphopentomutase">
    <location>
        <begin position="1"/>
        <end position="407"/>
    </location>
</feature>
<feature type="binding site" evidence="1">
    <location>
        <position position="10"/>
    </location>
    <ligand>
        <name>Mn(2+)</name>
        <dbReference type="ChEBI" id="CHEBI:29035"/>
        <label>1</label>
    </ligand>
</feature>
<feature type="binding site" evidence="1">
    <location>
        <position position="306"/>
    </location>
    <ligand>
        <name>Mn(2+)</name>
        <dbReference type="ChEBI" id="CHEBI:29035"/>
        <label>2</label>
    </ligand>
</feature>
<feature type="binding site" evidence="1">
    <location>
        <position position="311"/>
    </location>
    <ligand>
        <name>Mn(2+)</name>
        <dbReference type="ChEBI" id="CHEBI:29035"/>
        <label>2</label>
    </ligand>
</feature>
<feature type="binding site" evidence="1">
    <location>
        <position position="347"/>
    </location>
    <ligand>
        <name>Mn(2+)</name>
        <dbReference type="ChEBI" id="CHEBI:29035"/>
        <label>1</label>
    </ligand>
</feature>
<feature type="binding site" evidence="1">
    <location>
        <position position="348"/>
    </location>
    <ligand>
        <name>Mn(2+)</name>
        <dbReference type="ChEBI" id="CHEBI:29035"/>
        <label>1</label>
    </ligand>
</feature>
<feature type="binding site" evidence="1">
    <location>
        <position position="359"/>
    </location>
    <ligand>
        <name>Mn(2+)</name>
        <dbReference type="ChEBI" id="CHEBI:29035"/>
        <label>2</label>
    </ligand>
</feature>
<feature type="modified residue" description="N6-acetyllysine" evidence="3">
    <location>
        <position position="287"/>
    </location>
</feature>